<organism>
    <name type="scientific">Calanus finmarchicus</name>
    <name type="common">Calanus tonsus</name>
    <dbReference type="NCBI Taxonomy" id="6837"/>
    <lineage>
        <taxon>Eukaryota</taxon>
        <taxon>Metazoa</taxon>
        <taxon>Ecdysozoa</taxon>
        <taxon>Arthropoda</taxon>
        <taxon>Crustacea</taxon>
        <taxon>Multicrustacea</taxon>
        <taxon>Hexanauplia</taxon>
        <taxon>Copepoda</taxon>
        <taxon>Calanoida</taxon>
        <taxon>Calanidae</taxon>
        <taxon>Calanus</taxon>
    </lineage>
</organism>
<protein>
    <recommendedName>
        <fullName>ATP-dependent 6-phosphofructokinase</fullName>
        <shortName>ATP-PFK</shortName>
        <shortName>Phosphofructokinase</shortName>
        <ecNumber>2.7.1.11</ecNumber>
    </recommendedName>
    <alternativeName>
        <fullName>Phosphohexokinase</fullName>
    </alternativeName>
</protein>
<sequence>GGDGSLTGANRFKGEWSSLVKELLETGKITKEVAEKHSHLNIVGMVGSIDNDFCGTDMTIGTDSALHRIVEVADNIIPTAYSHQRAFVLEVMGRHCGYLALVAGIVTEADFVFAPEWPPEEDWPEKLCKKLELERQSGQRLNIIIVAEGAIDRQGNPITAEGVKKIIVDRLEMDTRTTVLGHIQ</sequence>
<proteinExistence type="evidence at transcript level"/>
<evidence type="ECO:0000250" key="1">
    <source>
        <dbReference type="UniProtKB" id="P16861"/>
    </source>
</evidence>
<evidence type="ECO:0000305" key="2"/>
<accession>Q27543</accession>
<keyword id="KW-0021">Allosteric enzyme</keyword>
<keyword id="KW-0067">ATP-binding</keyword>
<keyword id="KW-0963">Cytoplasm</keyword>
<keyword id="KW-0324">Glycolysis</keyword>
<keyword id="KW-0418">Kinase</keyword>
<keyword id="KW-0460">Magnesium</keyword>
<keyword id="KW-0479">Metal-binding</keyword>
<keyword id="KW-0547">Nucleotide-binding</keyword>
<keyword id="KW-0808">Transferase</keyword>
<reference key="1">
    <citation type="journal article" date="1995" name="Mol. Mar. Biol. Biotechnol.">
        <title>Nuclear genes from the copepod Calanus finmarchicus.</title>
        <authorList>
            <person name="Crawford D.L."/>
        </authorList>
    </citation>
    <scope>NUCLEOTIDE SEQUENCE [MRNA]</scope>
</reference>
<comment type="function">
    <text evidence="1">Catalyzes the phosphorylation of D-fructose 6-phosphate to fructose 1,6-bisphosphate by ATP, the first committing step of glycolysis.</text>
</comment>
<comment type="catalytic activity">
    <reaction evidence="1">
        <text>beta-D-fructose 6-phosphate + ATP = beta-D-fructose 1,6-bisphosphate + ADP + H(+)</text>
        <dbReference type="Rhea" id="RHEA:16109"/>
        <dbReference type="ChEBI" id="CHEBI:15378"/>
        <dbReference type="ChEBI" id="CHEBI:30616"/>
        <dbReference type="ChEBI" id="CHEBI:32966"/>
        <dbReference type="ChEBI" id="CHEBI:57634"/>
        <dbReference type="ChEBI" id="CHEBI:456216"/>
        <dbReference type="EC" id="2.7.1.11"/>
    </reaction>
</comment>
<comment type="cofactor">
    <cofactor evidence="1">
        <name>Mg(2+)</name>
        <dbReference type="ChEBI" id="CHEBI:18420"/>
    </cofactor>
</comment>
<comment type="activity regulation">
    <text evidence="1">Allosterically activated by ADP, AMP, or fructose 2,6-bisphosphate, and allosterically inhibited by ATP or citrate.</text>
</comment>
<comment type="pathway">
    <text evidence="1">Carbohydrate degradation; glycolysis; D-glyceraldehyde 3-phosphate and glycerone phosphate from D-glucose: step 3/4.</text>
</comment>
<comment type="subunit">
    <text evidence="1">Homotetramer.</text>
</comment>
<comment type="subcellular location">
    <subcellularLocation>
        <location evidence="1">Cytoplasm</location>
    </subcellularLocation>
</comment>
<comment type="similarity">
    <text evidence="2">Belongs to the phosphofructokinase type A (PFKA) family. ATP-dependent PFK group I subfamily. Eukaryotic two domain clade 'E' sub-subfamily.</text>
</comment>
<dbReference type="EC" id="2.7.1.11"/>
<dbReference type="EMBL" id="U21244">
    <property type="protein sequence ID" value="AAA85287.1"/>
    <property type="molecule type" value="mRNA"/>
</dbReference>
<dbReference type="SMR" id="Q27543"/>
<dbReference type="UniPathway" id="UPA00109">
    <property type="reaction ID" value="UER00182"/>
</dbReference>
<dbReference type="GO" id="GO:0005945">
    <property type="term" value="C:6-phosphofructokinase complex"/>
    <property type="evidence" value="ECO:0007669"/>
    <property type="project" value="TreeGrafter"/>
</dbReference>
<dbReference type="GO" id="GO:0003872">
    <property type="term" value="F:6-phosphofructokinase activity"/>
    <property type="evidence" value="ECO:0007669"/>
    <property type="project" value="UniProtKB-EC"/>
</dbReference>
<dbReference type="GO" id="GO:0016208">
    <property type="term" value="F:AMP binding"/>
    <property type="evidence" value="ECO:0007669"/>
    <property type="project" value="TreeGrafter"/>
</dbReference>
<dbReference type="GO" id="GO:0005524">
    <property type="term" value="F:ATP binding"/>
    <property type="evidence" value="ECO:0007669"/>
    <property type="project" value="UniProtKB-KW"/>
</dbReference>
<dbReference type="GO" id="GO:0070095">
    <property type="term" value="F:fructose-6-phosphate binding"/>
    <property type="evidence" value="ECO:0007669"/>
    <property type="project" value="TreeGrafter"/>
</dbReference>
<dbReference type="GO" id="GO:0042802">
    <property type="term" value="F:identical protein binding"/>
    <property type="evidence" value="ECO:0007669"/>
    <property type="project" value="TreeGrafter"/>
</dbReference>
<dbReference type="GO" id="GO:0046872">
    <property type="term" value="F:metal ion binding"/>
    <property type="evidence" value="ECO:0007669"/>
    <property type="project" value="UniProtKB-KW"/>
</dbReference>
<dbReference type="GO" id="GO:0048029">
    <property type="term" value="F:monosaccharide binding"/>
    <property type="evidence" value="ECO:0007669"/>
    <property type="project" value="TreeGrafter"/>
</dbReference>
<dbReference type="GO" id="GO:0061621">
    <property type="term" value="P:canonical glycolysis"/>
    <property type="evidence" value="ECO:0007669"/>
    <property type="project" value="TreeGrafter"/>
</dbReference>
<dbReference type="GO" id="GO:0030388">
    <property type="term" value="P:fructose 1,6-bisphosphate metabolic process"/>
    <property type="evidence" value="ECO:0007669"/>
    <property type="project" value="TreeGrafter"/>
</dbReference>
<dbReference type="GO" id="GO:0006002">
    <property type="term" value="P:fructose 6-phosphate metabolic process"/>
    <property type="evidence" value="ECO:0007669"/>
    <property type="project" value="InterPro"/>
</dbReference>
<dbReference type="FunFam" id="3.40.50.460:FF:000003">
    <property type="entry name" value="ATP-dependent 6-phosphofructokinase"/>
    <property type="match status" value="1"/>
</dbReference>
<dbReference type="Gene3D" id="3.40.50.450">
    <property type="match status" value="1"/>
</dbReference>
<dbReference type="Gene3D" id="3.40.50.460">
    <property type="entry name" value="Phosphofructokinase domain"/>
    <property type="match status" value="1"/>
</dbReference>
<dbReference type="InterPro" id="IPR022953">
    <property type="entry name" value="ATP_PFK"/>
</dbReference>
<dbReference type="InterPro" id="IPR000023">
    <property type="entry name" value="Phosphofructokinase_dom"/>
</dbReference>
<dbReference type="InterPro" id="IPR035966">
    <property type="entry name" value="PKF_sf"/>
</dbReference>
<dbReference type="PANTHER" id="PTHR13697:SF4">
    <property type="entry name" value="ATP-DEPENDENT 6-PHOSPHOFRUCTOKINASE"/>
    <property type="match status" value="1"/>
</dbReference>
<dbReference type="PANTHER" id="PTHR13697">
    <property type="entry name" value="PHOSPHOFRUCTOKINASE"/>
    <property type="match status" value="1"/>
</dbReference>
<dbReference type="Pfam" id="PF00365">
    <property type="entry name" value="PFK"/>
    <property type="match status" value="1"/>
</dbReference>
<dbReference type="PRINTS" id="PR00476">
    <property type="entry name" value="PHFRCTKINASE"/>
</dbReference>
<dbReference type="SUPFAM" id="SSF53784">
    <property type="entry name" value="Phosphofructokinase"/>
    <property type="match status" value="1"/>
</dbReference>
<feature type="chain" id="PRO_0000112028" description="ATP-dependent 6-phosphofructokinase">
    <location>
        <begin position="1" status="less than"/>
        <end position="184" status="greater than"/>
    </location>
</feature>
<feature type="region of interest" description="N-terminal catalytic PFK domain 1" evidence="1">
    <location>
        <begin position="1" status="less than"/>
        <end position="184" status="greater than"/>
    </location>
</feature>
<feature type="active site" description="Proton acceptor" evidence="1">
    <location>
        <position position="50"/>
    </location>
</feature>
<feature type="binding site" evidence="1">
    <location>
        <begin position="2"/>
        <end position="5"/>
    </location>
    <ligand>
        <name>ATP</name>
        <dbReference type="ChEBI" id="CHEBI:30616"/>
    </ligand>
</feature>
<feature type="binding site" evidence="1">
    <location>
        <position position="3"/>
    </location>
    <ligand>
        <name>Mg(2+)</name>
        <dbReference type="ChEBI" id="CHEBI:18420"/>
        <note>catalytic</note>
    </ligand>
</feature>
<feature type="binding site" description="in other chain" evidence="1">
    <location>
        <begin position="48"/>
        <end position="50"/>
    </location>
    <ligand>
        <name>substrate</name>
        <note>ligand shared between dimeric partners</note>
    </ligand>
</feature>
<feature type="binding site" evidence="1">
    <location>
        <position position="85"/>
    </location>
    <ligand>
        <name>substrate</name>
        <note>ligand shared between dimeric partners</note>
    </ligand>
</feature>
<feature type="binding site" description="in other chain" evidence="1">
    <location>
        <begin position="92"/>
        <end position="94"/>
    </location>
    <ligand>
        <name>substrate</name>
        <note>ligand shared between dimeric partners</note>
    </ligand>
</feature>
<feature type="binding site" description="in other chain" evidence="1">
    <location>
        <position position="148"/>
    </location>
    <ligand>
        <name>substrate</name>
        <note>ligand shared between dimeric partners</note>
    </ligand>
</feature>
<feature type="binding site" evidence="1">
    <location>
        <position position="176"/>
    </location>
    <ligand>
        <name>substrate</name>
        <note>ligand shared between dimeric partners</note>
    </ligand>
</feature>
<feature type="binding site" description="in other chain" evidence="1">
    <location>
        <begin position="182"/>
        <end position="184" status="greater than"/>
    </location>
    <ligand>
        <name>substrate</name>
        <note>ligand shared between dimeric partners</note>
    </ligand>
</feature>
<feature type="non-terminal residue">
    <location>
        <position position="1"/>
    </location>
</feature>
<feature type="non-terminal residue">
    <location>
        <position position="184"/>
    </location>
</feature>
<gene>
    <name type="primary">PFK</name>
</gene>
<name>PFKA_CALFI</name>